<evidence type="ECO:0000250" key="1">
    <source>
        <dbReference type="UniProtKB" id="A0A509AJG0"/>
    </source>
</evidence>
<evidence type="ECO:0000250" key="2">
    <source>
        <dbReference type="UniProtKB" id="G3I8R9"/>
    </source>
</evidence>
<evidence type="ECO:0000250" key="3">
    <source>
        <dbReference type="UniProtKB" id="P11021"/>
    </source>
</evidence>
<evidence type="ECO:0000250" key="4">
    <source>
        <dbReference type="UniProtKB" id="P20029"/>
    </source>
</evidence>
<evidence type="ECO:0000250" key="5">
    <source>
        <dbReference type="UniProtKB" id="Q05866"/>
    </source>
</evidence>
<evidence type="ECO:0000255" key="6">
    <source>
        <dbReference type="PROSITE-ProRule" id="PRU10138"/>
    </source>
</evidence>
<evidence type="ECO:0000256" key="7">
    <source>
        <dbReference type="SAM" id="MobiDB-lite"/>
    </source>
</evidence>
<evidence type="ECO:0000269" key="8">
    <source>
    </source>
</evidence>
<evidence type="ECO:0000303" key="9">
    <source>
    </source>
</evidence>
<evidence type="ECO:0000305" key="10"/>
<evidence type="ECO:0000312" key="11">
    <source>
        <dbReference type="EMBL" id="AAA29502.1"/>
    </source>
</evidence>
<organism>
    <name type="scientific">Plasmodium falciparum</name>
    <dbReference type="NCBI Taxonomy" id="5833"/>
    <lineage>
        <taxon>Eukaryota</taxon>
        <taxon>Sar</taxon>
        <taxon>Alveolata</taxon>
        <taxon>Apicomplexa</taxon>
        <taxon>Aconoidasida</taxon>
        <taxon>Haemosporida</taxon>
        <taxon>Plasmodiidae</taxon>
        <taxon>Plasmodium</taxon>
        <taxon>Plasmodium (Laverania)</taxon>
    </lineage>
</organism>
<reference key="1">
    <citation type="journal article" date="1988" name="DNA">
        <title>A second antigenic heat shock protein of Plasmodium falciparum.</title>
        <authorList>
            <person name="Peterson M.G."/>
            <person name="Crewther P.E."/>
            <person name="Thompson J.K."/>
            <person name="Corcoran L.M."/>
            <person name="Coppel R.L."/>
            <person name="Brown G.V."/>
            <person name="Anders R.F."/>
            <person name="Kemp D.J."/>
        </authorList>
    </citation>
    <scope>NUCLEOTIDE SEQUENCE [MRNA]</scope>
    <scope>DEVELOPMENTAL STAGE</scope>
    <source>
        <strain evidence="11">Isolate NF7</strain>
    </source>
</reference>
<name>BIP_PLAFA</name>
<keyword id="KW-0067">ATP-binding</keyword>
<keyword id="KW-0143">Chaperone</keyword>
<keyword id="KW-0256">Endoplasmic reticulum</keyword>
<keyword id="KW-0378">Hydrolase</keyword>
<keyword id="KW-0547">Nucleotide-binding</keyword>
<keyword id="KW-0346">Stress response</keyword>
<accession>P12794</accession>
<comment type="function">
    <text evidence="2 3 4">Endoplasmic reticulum chaperone that plays a key role in protein folding and quality control in the endoplasmic reticulum lumen. Involved in the correct folding of proteins and degradation of misfolded proteins (By similarity). Acts as a key repressor of the unfolded protein response (UPR) (By similarity).</text>
</comment>
<comment type="catalytic activity">
    <reaction evidence="3">
        <text>ATP + H2O = ADP + phosphate + H(+)</text>
        <dbReference type="Rhea" id="RHEA:13065"/>
        <dbReference type="ChEBI" id="CHEBI:15377"/>
        <dbReference type="ChEBI" id="CHEBI:15378"/>
        <dbReference type="ChEBI" id="CHEBI:30616"/>
        <dbReference type="ChEBI" id="CHEBI:43474"/>
        <dbReference type="ChEBI" id="CHEBI:456216"/>
        <dbReference type="EC" id="3.6.4.10"/>
    </reaction>
</comment>
<comment type="activity regulation">
    <text evidence="3">The chaperone activity is regulated by ATP-induced allosteric coupling of the nucleotide-binding (NBD) and substrate-binding (SBD) domains. In the ADP-bound and nucleotide-free (apo) states, the two domains have little interaction. In contrast, in the ATP-bound state the two domains are tightly coupled, which results in drastically accelerated kinetics in both binding and release of polypeptide substrates. J domain-containing co-chaperones stimulate the ATPase activity and are required for efficient substrate recognition.</text>
</comment>
<comment type="subunit">
    <text evidence="1">Interacts with PK4; the interaction is disrupted in response to stress.</text>
</comment>
<comment type="subcellular location">
    <subcellularLocation>
        <location evidence="1">Endoplasmic reticulum</location>
    </subcellularLocation>
</comment>
<comment type="developmental stage">
    <text evidence="8">Expressed during the asexual blood stage; expression starts in trophozoites and increases in schizonts and merozoites (at protein level).</text>
</comment>
<comment type="similarity">
    <text evidence="10">Belongs to the heat shock protein 70 family.</text>
</comment>
<feature type="chain" id="PRO_0000078664" description="Endoplasmic reticulum chaperone BIP">
    <location>
        <begin position="1" status="less than"/>
        <end position="279"/>
    </location>
</feature>
<feature type="region of interest" description="Substrate-binding (SBD)" evidence="3">
    <location>
        <begin position="24"/>
        <end position="123"/>
    </location>
</feature>
<feature type="region of interest" description="Disordered" evidence="7">
    <location>
        <begin position="257"/>
        <end position="279"/>
    </location>
</feature>
<feature type="short sequence motif" description="Prevents secretion from ER" evidence="6">
    <location>
        <begin position="276"/>
        <end position="279"/>
    </location>
</feature>
<feature type="compositionally biased region" description="Acidic residues" evidence="7">
    <location>
        <begin position="270"/>
        <end position="279"/>
    </location>
</feature>
<feature type="non-terminal residue">
    <location>
        <position position="1"/>
    </location>
</feature>
<proteinExistence type="evidence at protein level"/>
<sequence length="279" mass="30657">EFFNGKEPNRGINPDEAVAYGAAIQAGIILGEELQDVVLLDVTPLTLGIETVGGIMTQLIKRNTVIPTKKSQTFSTYQDNQPAVLIQVFEGERALTKDNHLLGKFELSGIPPAQRGVPKIEVTFTVDKNGILHVEAEDKGTGKSRGITITNDKGRLSKEQIEKMINDAEKFADEDKNLREKVEAKNNLDNYIQSMKATVEDKDKLADKIEKEDKNTILSAVKDAEDWLNNNSNADSEALKQKLKDLEAVCQPIIVKLYGQPGGPSPQPSGDEDVDSDEL</sequence>
<protein>
    <recommendedName>
        <fullName evidence="3">Endoplasmic reticulum chaperone BIP</fullName>
        <ecNumber evidence="3">3.6.4.10</ecNumber>
    </recommendedName>
    <alternativeName>
        <fullName evidence="5">78 kDa glucose-regulated protein homolog</fullName>
        <shortName evidence="5">GRP-78 homolog</shortName>
        <shortName evidence="5">Pfgrp</shortName>
    </alternativeName>
    <alternativeName>
        <fullName evidence="3">Binding-immunoglobulin protein homolog</fullName>
        <shortName evidence="3">BiP</shortName>
    </alternativeName>
    <alternativeName>
        <fullName evidence="9">Heat shock protein 70-2</fullName>
        <shortName evidence="9">Pfhsp70-2</shortName>
    </alternativeName>
</protein>
<gene>
    <name evidence="1" type="primary">BIP</name>
</gene>
<dbReference type="EC" id="3.6.4.10" evidence="3"/>
<dbReference type="EMBL" id="M18836">
    <property type="protein sequence ID" value="AAA29502.1"/>
    <property type="molecule type" value="mRNA"/>
</dbReference>
<dbReference type="SMR" id="P12794"/>
<dbReference type="EnsemblProtists" id="CAD51861">
    <property type="protein sequence ID" value="CAD51861"/>
    <property type="gene ID" value="PF3D7_0917900"/>
</dbReference>
<dbReference type="VEuPathDB" id="PlasmoDB:PF3D7_0917900"/>
<dbReference type="VEuPathDB" id="PlasmoDB:Pf7G8-2_000266000"/>
<dbReference type="VEuPathDB" id="PlasmoDB:Pf7G8_090022800"/>
<dbReference type="VEuPathDB" id="PlasmoDB:PfCD01_090022300"/>
<dbReference type="VEuPathDB" id="PlasmoDB:PfDd2_090023000"/>
<dbReference type="VEuPathDB" id="PlasmoDB:PfGA01_090022200"/>
<dbReference type="VEuPathDB" id="PlasmoDB:PfGB4_090022900"/>
<dbReference type="VEuPathDB" id="PlasmoDB:PfGN01_090022800"/>
<dbReference type="VEuPathDB" id="PlasmoDB:PfHB3_090022600"/>
<dbReference type="VEuPathDB" id="PlasmoDB:PfIT_090022500"/>
<dbReference type="VEuPathDB" id="PlasmoDB:PfKE01_090022300"/>
<dbReference type="VEuPathDB" id="PlasmoDB:PfKH01_090022200"/>
<dbReference type="VEuPathDB" id="PlasmoDB:PfKH02_090022700"/>
<dbReference type="VEuPathDB" id="PlasmoDB:PfML01_090022400"/>
<dbReference type="VEuPathDB" id="PlasmoDB:PfNF135_090021600"/>
<dbReference type="VEuPathDB" id="PlasmoDB:PfNF166_090022000"/>
<dbReference type="VEuPathDB" id="PlasmoDB:PfNF54_090023100"/>
<dbReference type="VEuPathDB" id="PlasmoDB:PfSD01_090022900"/>
<dbReference type="VEuPathDB" id="PlasmoDB:PfSN01_090022500"/>
<dbReference type="VEuPathDB" id="PlasmoDB:PfTG01_090022300"/>
<dbReference type="GO" id="GO:0005783">
    <property type="term" value="C:endoplasmic reticulum"/>
    <property type="evidence" value="ECO:0007669"/>
    <property type="project" value="UniProtKB-SubCell"/>
</dbReference>
<dbReference type="GO" id="GO:0005524">
    <property type="term" value="F:ATP binding"/>
    <property type="evidence" value="ECO:0007669"/>
    <property type="project" value="UniProtKB-KW"/>
</dbReference>
<dbReference type="GO" id="GO:0016887">
    <property type="term" value="F:ATP hydrolysis activity"/>
    <property type="evidence" value="ECO:0007669"/>
    <property type="project" value="RHEA"/>
</dbReference>
<dbReference type="GO" id="GO:0140662">
    <property type="term" value="F:ATP-dependent protein folding chaperone"/>
    <property type="evidence" value="ECO:0007669"/>
    <property type="project" value="InterPro"/>
</dbReference>
<dbReference type="FunFam" id="2.60.34.10:FF:000002">
    <property type="entry name" value="Heat shock 70 kDa"/>
    <property type="match status" value="1"/>
</dbReference>
<dbReference type="FunFam" id="1.20.1270.10:FF:000023">
    <property type="entry name" value="Heat shock protein 70"/>
    <property type="match status" value="1"/>
</dbReference>
<dbReference type="Gene3D" id="1.20.1270.10">
    <property type="match status" value="1"/>
</dbReference>
<dbReference type="Gene3D" id="3.30.420.40">
    <property type="match status" value="2"/>
</dbReference>
<dbReference type="Gene3D" id="2.60.34.10">
    <property type="entry name" value="Substrate Binding Domain Of DNAk, Chain A, domain 1"/>
    <property type="match status" value="1"/>
</dbReference>
<dbReference type="InterPro" id="IPR029048">
    <property type="entry name" value="HSP70_C_sf"/>
</dbReference>
<dbReference type="InterPro" id="IPR029047">
    <property type="entry name" value="HSP70_peptide-bd_sf"/>
</dbReference>
<dbReference type="InterPro" id="IPR013126">
    <property type="entry name" value="Hsp_70_fam"/>
</dbReference>
<dbReference type="PANTHER" id="PTHR19375">
    <property type="entry name" value="HEAT SHOCK PROTEIN 70KDA"/>
    <property type="match status" value="1"/>
</dbReference>
<dbReference type="Pfam" id="PF00012">
    <property type="entry name" value="HSP70"/>
    <property type="match status" value="1"/>
</dbReference>
<dbReference type="PRINTS" id="PR00301">
    <property type="entry name" value="HEATSHOCK70"/>
</dbReference>
<dbReference type="SUPFAM" id="SSF100934">
    <property type="entry name" value="Heat shock protein 70kD (HSP70), C-terminal subdomain"/>
    <property type="match status" value="1"/>
</dbReference>
<dbReference type="SUPFAM" id="SSF100920">
    <property type="entry name" value="Heat shock protein 70kD (HSP70), peptide-binding domain"/>
    <property type="match status" value="1"/>
</dbReference>
<dbReference type="PROSITE" id="PS00014">
    <property type="entry name" value="ER_TARGET"/>
    <property type="match status" value="1"/>
</dbReference>